<proteinExistence type="inferred from homology"/>
<feature type="chain" id="PRO_1000006056" description="Elongation factor Ts">
    <location>
        <begin position="1"/>
        <end position="291"/>
    </location>
</feature>
<feature type="region of interest" description="Involved in Mg(2+) ion dislocation from EF-Tu" evidence="1">
    <location>
        <begin position="84"/>
        <end position="87"/>
    </location>
</feature>
<reference key="1">
    <citation type="submission" date="2006-12" db="EMBL/GenBank/DDBJ databases">
        <title>Bifidobacterium adolescentis complete genome sequence.</title>
        <authorList>
            <person name="Suzuki T."/>
            <person name="Tsuda Y."/>
            <person name="Kanou N."/>
            <person name="Inoue T."/>
            <person name="Kumazaki K."/>
            <person name="Nagano S."/>
            <person name="Hirai S."/>
            <person name="Tanaka K."/>
            <person name="Watanabe K."/>
        </authorList>
    </citation>
    <scope>NUCLEOTIDE SEQUENCE [LARGE SCALE GENOMIC DNA]</scope>
    <source>
        <strain>ATCC 15703 / DSM 20083 / NCTC 11814 / E194a</strain>
    </source>
</reference>
<name>EFTS_BIFAA</name>
<protein>
    <recommendedName>
        <fullName evidence="1">Elongation factor Ts</fullName>
        <shortName evidence="1">EF-Ts</shortName>
    </recommendedName>
</protein>
<organism>
    <name type="scientific">Bifidobacterium adolescentis (strain ATCC 15703 / DSM 20083 / NCTC 11814 / E194a)</name>
    <dbReference type="NCBI Taxonomy" id="367928"/>
    <lineage>
        <taxon>Bacteria</taxon>
        <taxon>Bacillati</taxon>
        <taxon>Actinomycetota</taxon>
        <taxon>Actinomycetes</taxon>
        <taxon>Bifidobacteriales</taxon>
        <taxon>Bifidobacteriaceae</taxon>
        <taxon>Bifidobacterium</taxon>
    </lineage>
</organism>
<accession>A1A1I0</accession>
<comment type="function">
    <text evidence="1">Associates with the EF-Tu.GDP complex and induces the exchange of GDP to GTP. It remains bound to the aminoacyl-tRNA.EF-Tu.GTP complex up to the GTP hydrolysis stage on the ribosome.</text>
</comment>
<comment type="subcellular location">
    <subcellularLocation>
        <location evidence="1">Cytoplasm</location>
    </subcellularLocation>
</comment>
<comment type="similarity">
    <text evidence="1">Belongs to the EF-Ts family.</text>
</comment>
<gene>
    <name evidence="1" type="primary">tsf</name>
    <name type="ordered locus">BAD_0782</name>
</gene>
<keyword id="KW-0963">Cytoplasm</keyword>
<keyword id="KW-0251">Elongation factor</keyword>
<keyword id="KW-0648">Protein biosynthesis</keyword>
<keyword id="KW-1185">Reference proteome</keyword>
<sequence length="291" mass="30629">MAAITAALIKQVREETGAGMMDVKKALTEAEGDVARAKEIIRAKGIQAAGKREGRKAQEGTIASTVVESANGQTGYAVELNSETDFVAKTPKFVEFAGSVLDDAVKAEASSVDEVLAAASGDTTVKEAVEEAAALFGEHVKVGQFAKVEGPHVEVYAHKKSAEMPPSIVAMIATDEAGAAVAHEAALQISAMGAQWLTREDVPADVLESERRVATEKTTEELKSKGKPEAVIEKIAPKIVEGRLGAFYKETVLLEQAYVKDPSKTVGDLFKEVGGTALSFARVEVGKGDAE</sequence>
<evidence type="ECO:0000255" key="1">
    <source>
        <dbReference type="HAMAP-Rule" id="MF_00050"/>
    </source>
</evidence>
<dbReference type="EMBL" id="AP009256">
    <property type="protein sequence ID" value="BAF39563.1"/>
    <property type="molecule type" value="Genomic_DNA"/>
</dbReference>
<dbReference type="RefSeq" id="WP_003809325.1">
    <property type="nucleotide sequence ID" value="NZ_CAXVNC010000004.1"/>
</dbReference>
<dbReference type="SMR" id="A1A1I0"/>
<dbReference type="STRING" id="367928.BAD_0782"/>
<dbReference type="PaxDb" id="1680-BADO_0831"/>
<dbReference type="GeneID" id="4556730"/>
<dbReference type="KEGG" id="bad:BAD_0782"/>
<dbReference type="HOGENOM" id="CLU_047155_0_0_11"/>
<dbReference type="Proteomes" id="UP000008702">
    <property type="component" value="Chromosome"/>
</dbReference>
<dbReference type="GO" id="GO:0005737">
    <property type="term" value="C:cytoplasm"/>
    <property type="evidence" value="ECO:0007669"/>
    <property type="project" value="UniProtKB-SubCell"/>
</dbReference>
<dbReference type="GO" id="GO:0003746">
    <property type="term" value="F:translation elongation factor activity"/>
    <property type="evidence" value="ECO:0007669"/>
    <property type="project" value="UniProtKB-UniRule"/>
</dbReference>
<dbReference type="CDD" id="cd14275">
    <property type="entry name" value="UBA_EF-Ts"/>
    <property type="match status" value="1"/>
</dbReference>
<dbReference type="FunFam" id="1.10.8.10:FF:000001">
    <property type="entry name" value="Elongation factor Ts"/>
    <property type="match status" value="1"/>
</dbReference>
<dbReference type="Gene3D" id="1.10.286.20">
    <property type="match status" value="1"/>
</dbReference>
<dbReference type="Gene3D" id="1.10.8.10">
    <property type="entry name" value="DNA helicase RuvA subunit, C-terminal domain"/>
    <property type="match status" value="1"/>
</dbReference>
<dbReference type="Gene3D" id="3.30.479.20">
    <property type="entry name" value="Elongation factor Ts, dimerisation domain"/>
    <property type="match status" value="2"/>
</dbReference>
<dbReference type="HAMAP" id="MF_00050">
    <property type="entry name" value="EF_Ts"/>
    <property type="match status" value="1"/>
</dbReference>
<dbReference type="InterPro" id="IPR036402">
    <property type="entry name" value="EF-Ts_dimer_sf"/>
</dbReference>
<dbReference type="InterPro" id="IPR001816">
    <property type="entry name" value="Transl_elong_EFTs/EF1B"/>
</dbReference>
<dbReference type="InterPro" id="IPR014039">
    <property type="entry name" value="Transl_elong_EFTs/EF1B_dimer"/>
</dbReference>
<dbReference type="InterPro" id="IPR018101">
    <property type="entry name" value="Transl_elong_Ts_CS"/>
</dbReference>
<dbReference type="InterPro" id="IPR009060">
    <property type="entry name" value="UBA-like_sf"/>
</dbReference>
<dbReference type="NCBIfam" id="TIGR00116">
    <property type="entry name" value="tsf"/>
    <property type="match status" value="1"/>
</dbReference>
<dbReference type="PANTHER" id="PTHR11741">
    <property type="entry name" value="ELONGATION FACTOR TS"/>
    <property type="match status" value="1"/>
</dbReference>
<dbReference type="PANTHER" id="PTHR11741:SF0">
    <property type="entry name" value="ELONGATION FACTOR TS, MITOCHONDRIAL"/>
    <property type="match status" value="1"/>
</dbReference>
<dbReference type="Pfam" id="PF00889">
    <property type="entry name" value="EF_TS"/>
    <property type="match status" value="1"/>
</dbReference>
<dbReference type="SUPFAM" id="SSF54713">
    <property type="entry name" value="Elongation factor Ts (EF-Ts), dimerisation domain"/>
    <property type="match status" value="1"/>
</dbReference>
<dbReference type="SUPFAM" id="SSF46934">
    <property type="entry name" value="UBA-like"/>
    <property type="match status" value="1"/>
</dbReference>
<dbReference type="PROSITE" id="PS01127">
    <property type="entry name" value="EF_TS_2"/>
    <property type="match status" value="1"/>
</dbReference>